<name>NU4LM_TRIPI</name>
<accession>Q36832</accession>
<feature type="chain" id="PRO_0000118497" description="NADH-ubiquinone oxidoreductase chain 4L">
    <location>
        <begin position="1"/>
        <end position="88"/>
    </location>
</feature>
<feature type="transmembrane region" description="Helical" evidence="2">
    <location>
        <begin position="22"/>
        <end position="42"/>
    </location>
</feature>
<feature type="transmembrane region" description="Helical" evidence="2">
    <location>
        <begin position="57"/>
        <end position="77"/>
    </location>
</feature>
<geneLocation type="mitochondrion"/>
<proteinExistence type="inferred from homology"/>
<sequence length="88" mass="9710">MTLSLVLFLIGILGFILNRKNIILMIISIEIMLLAVTLLVLVSSYQFDDIMGQTYSIYIIAIAGAESAIGLGILVAYYRLRGNISLRT</sequence>
<gene>
    <name type="primary">ND4L</name>
</gene>
<comment type="function">
    <text evidence="1">Core subunit of the mitochondrial membrane respiratory chain NADH dehydrogenase (Complex I) that is believed to belong to the minimal assembly required for catalysis. Complex I functions in the transfer of electrons from NADH to the respiratory chain. The immediate electron acceptor for the enzyme is believed to be ubiquinone (By similarity).</text>
</comment>
<comment type="catalytic activity">
    <reaction>
        <text>a ubiquinone + NADH + 5 H(+)(in) = a ubiquinol + NAD(+) + 4 H(+)(out)</text>
        <dbReference type="Rhea" id="RHEA:29091"/>
        <dbReference type="Rhea" id="RHEA-COMP:9565"/>
        <dbReference type="Rhea" id="RHEA-COMP:9566"/>
        <dbReference type="ChEBI" id="CHEBI:15378"/>
        <dbReference type="ChEBI" id="CHEBI:16389"/>
        <dbReference type="ChEBI" id="CHEBI:17976"/>
        <dbReference type="ChEBI" id="CHEBI:57540"/>
        <dbReference type="ChEBI" id="CHEBI:57945"/>
        <dbReference type="EC" id="7.1.1.2"/>
    </reaction>
</comment>
<comment type="subcellular location">
    <subcellularLocation>
        <location evidence="1">Mitochondrion membrane</location>
        <topology evidence="1">Multi-pass membrane protein</topology>
    </subcellularLocation>
</comment>
<comment type="similarity">
    <text evidence="3">Belongs to the complex I subunit 4L family.</text>
</comment>
<keyword id="KW-0249">Electron transport</keyword>
<keyword id="KW-0472">Membrane</keyword>
<keyword id="KW-0496">Mitochondrion</keyword>
<keyword id="KW-0520">NAD</keyword>
<keyword id="KW-0679">Respiratory chain</keyword>
<keyword id="KW-1278">Translocase</keyword>
<keyword id="KW-0812">Transmembrane</keyword>
<keyword id="KW-1133">Transmembrane helix</keyword>
<keyword id="KW-0813">Transport</keyword>
<keyword id="KW-0830">Ubiquinone</keyword>
<dbReference type="EC" id="7.1.1.2"/>
<dbReference type="EMBL" id="X85236">
    <property type="protein sequence ID" value="CAA59493.1"/>
    <property type="molecule type" value="Genomic_DNA"/>
</dbReference>
<dbReference type="PIR" id="S53088">
    <property type="entry name" value="S53088"/>
</dbReference>
<dbReference type="SMR" id="Q36832"/>
<dbReference type="GO" id="GO:0031966">
    <property type="term" value="C:mitochondrial membrane"/>
    <property type="evidence" value="ECO:0007669"/>
    <property type="project" value="UniProtKB-SubCell"/>
</dbReference>
<dbReference type="GO" id="GO:0030964">
    <property type="term" value="C:NADH dehydrogenase complex"/>
    <property type="evidence" value="ECO:0007669"/>
    <property type="project" value="TreeGrafter"/>
</dbReference>
<dbReference type="GO" id="GO:0008137">
    <property type="term" value="F:NADH dehydrogenase (ubiquinone) activity"/>
    <property type="evidence" value="ECO:0007669"/>
    <property type="project" value="UniProtKB-EC"/>
</dbReference>
<dbReference type="GO" id="GO:0042773">
    <property type="term" value="P:ATP synthesis coupled electron transport"/>
    <property type="evidence" value="ECO:0007669"/>
    <property type="project" value="InterPro"/>
</dbReference>
<dbReference type="FunFam" id="1.10.287.3510:FF:000004">
    <property type="entry name" value="NADH-ubiquinone oxidoreductase chain 4L"/>
    <property type="match status" value="1"/>
</dbReference>
<dbReference type="Gene3D" id="1.10.287.3510">
    <property type="match status" value="1"/>
</dbReference>
<dbReference type="HAMAP" id="MF_01456">
    <property type="entry name" value="NDH1_NuoK"/>
    <property type="match status" value="1"/>
</dbReference>
<dbReference type="InterPro" id="IPR001133">
    <property type="entry name" value="NADH_UbQ_OxRdtase_chain4L/K"/>
</dbReference>
<dbReference type="InterPro" id="IPR039428">
    <property type="entry name" value="NUOK/Mnh_C1-like"/>
</dbReference>
<dbReference type="NCBIfam" id="NF004320">
    <property type="entry name" value="PRK05715.1-2"/>
    <property type="match status" value="1"/>
</dbReference>
<dbReference type="PANTHER" id="PTHR11434:SF16">
    <property type="entry name" value="NADH-UBIQUINONE OXIDOREDUCTASE CHAIN 4L"/>
    <property type="match status" value="1"/>
</dbReference>
<dbReference type="PANTHER" id="PTHR11434">
    <property type="entry name" value="NADH-UBIQUINONE OXIDOREDUCTASE SUBUNIT ND4L"/>
    <property type="match status" value="1"/>
</dbReference>
<dbReference type="Pfam" id="PF00420">
    <property type="entry name" value="Oxidored_q2"/>
    <property type="match status" value="1"/>
</dbReference>
<protein>
    <recommendedName>
        <fullName>NADH-ubiquinone oxidoreductase chain 4L</fullName>
        <ecNumber>7.1.1.2</ecNumber>
    </recommendedName>
    <alternativeName>
        <fullName>NADH dehydrogenase subunit 4L</fullName>
    </alternativeName>
</protein>
<organism>
    <name type="scientific">Trimorphomyces papilionaceus</name>
    <name type="common">Jelly fungus</name>
    <dbReference type="NCBI Taxonomy" id="5221"/>
    <lineage>
        <taxon>Eukaryota</taxon>
        <taxon>Fungi</taxon>
        <taxon>Dikarya</taxon>
        <taxon>Basidiomycota</taxon>
        <taxon>Agaricomycotina</taxon>
        <taxon>Tremellomycetes</taxon>
        <taxon>Tremellales</taxon>
        <taxon>Trimorphomycetaceae</taxon>
        <taxon>Trimorphomyces</taxon>
    </lineage>
</organism>
<reference key="1">
    <citation type="submission" date="1995-03" db="EMBL/GenBank/DDBJ databases">
        <title>Sequence analysis of the cytochrome b gene of Trimorphomyces papilionaceus mitochondria.</title>
        <authorList>
            <person name="Kim Y.H."/>
            <person name="Kang Y.W."/>
            <person name="Jung H.S."/>
        </authorList>
    </citation>
    <scope>NUCLEOTIDE SEQUENCE [GENOMIC DNA]</scope>
    <source>
        <strain>UBC 75-7237-d</strain>
    </source>
</reference>
<evidence type="ECO:0000250" key="1"/>
<evidence type="ECO:0000255" key="2"/>
<evidence type="ECO:0000305" key="3"/>